<proteinExistence type="inferred from homology"/>
<feature type="chain" id="PRO_0000349500" description="tRNA-specific 2-thiouridylase MnmA">
    <location>
        <begin position="1"/>
        <end position="377"/>
    </location>
</feature>
<feature type="region of interest" description="Interaction with target base in tRNA" evidence="1">
    <location>
        <begin position="94"/>
        <end position="96"/>
    </location>
</feature>
<feature type="region of interest" description="Interaction with tRNA" evidence="1">
    <location>
        <begin position="151"/>
        <end position="153"/>
    </location>
</feature>
<feature type="region of interest" description="Interaction with tRNA" evidence="1">
    <location>
        <begin position="315"/>
        <end position="316"/>
    </location>
</feature>
<feature type="active site" description="Nucleophile" evidence="1">
    <location>
        <position position="99"/>
    </location>
</feature>
<feature type="active site" description="Cysteine persulfide intermediate" evidence="1">
    <location>
        <position position="201"/>
    </location>
</feature>
<feature type="binding site" evidence="1">
    <location>
        <begin position="8"/>
        <end position="15"/>
    </location>
    <ligand>
        <name>ATP</name>
        <dbReference type="ChEBI" id="CHEBI:30616"/>
    </ligand>
</feature>
<feature type="binding site" evidence="1">
    <location>
        <position position="34"/>
    </location>
    <ligand>
        <name>ATP</name>
        <dbReference type="ChEBI" id="CHEBI:30616"/>
    </ligand>
</feature>
<feature type="binding site" evidence="1">
    <location>
        <position position="123"/>
    </location>
    <ligand>
        <name>ATP</name>
        <dbReference type="ChEBI" id="CHEBI:30616"/>
    </ligand>
</feature>
<feature type="site" description="Interaction with tRNA" evidence="1">
    <location>
        <position position="124"/>
    </location>
</feature>
<feature type="site" description="Interaction with tRNA" evidence="1">
    <location>
        <position position="350"/>
    </location>
</feature>
<feature type="disulfide bond" description="Alternate" evidence="1">
    <location>
        <begin position="99"/>
        <end position="201"/>
    </location>
</feature>
<dbReference type="EC" id="2.8.1.13" evidence="1"/>
<dbReference type="EMBL" id="CU459141">
    <property type="protein sequence ID" value="CAM85974.1"/>
    <property type="molecule type" value="Genomic_DNA"/>
</dbReference>
<dbReference type="RefSeq" id="WP_001187604.1">
    <property type="nucleotide sequence ID" value="NZ_JBDGFB010000018.1"/>
</dbReference>
<dbReference type="SMR" id="B0VBY5"/>
<dbReference type="EnsemblBacteria" id="CAM85974">
    <property type="protein sequence ID" value="CAM85974"/>
    <property type="gene ID" value="ABAYE1041"/>
</dbReference>
<dbReference type="GeneID" id="92894744"/>
<dbReference type="KEGG" id="aby:ABAYE1041"/>
<dbReference type="HOGENOM" id="CLU_035188_1_0_6"/>
<dbReference type="GO" id="GO:0005737">
    <property type="term" value="C:cytoplasm"/>
    <property type="evidence" value="ECO:0007669"/>
    <property type="project" value="UniProtKB-SubCell"/>
</dbReference>
<dbReference type="GO" id="GO:0005524">
    <property type="term" value="F:ATP binding"/>
    <property type="evidence" value="ECO:0007669"/>
    <property type="project" value="UniProtKB-KW"/>
</dbReference>
<dbReference type="GO" id="GO:0000049">
    <property type="term" value="F:tRNA binding"/>
    <property type="evidence" value="ECO:0007669"/>
    <property type="project" value="UniProtKB-KW"/>
</dbReference>
<dbReference type="GO" id="GO:0103016">
    <property type="term" value="F:tRNA-uridine 2-sulfurtransferase activity"/>
    <property type="evidence" value="ECO:0007669"/>
    <property type="project" value="UniProtKB-EC"/>
</dbReference>
<dbReference type="GO" id="GO:0002143">
    <property type="term" value="P:tRNA wobble position uridine thiolation"/>
    <property type="evidence" value="ECO:0007669"/>
    <property type="project" value="TreeGrafter"/>
</dbReference>
<dbReference type="CDD" id="cd01998">
    <property type="entry name" value="MnmA_TRMU-like"/>
    <property type="match status" value="1"/>
</dbReference>
<dbReference type="FunFam" id="2.30.30.280:FF:000001">
    <property type="entry name" value="tRNA-specific 2-thiouridylase MnmA"/>
    <property type="match status" value="1"/>
</dbReference>
<dbReference type="FunFam" id="2.40.30.10:FF:000023">
    <property type="entry name" value="tRNA-specific 2-thiouridylase MnmA"/>
    <property type="match status" value="1"/>
</dbReference>
<dbReference type="FunFam" id="3.40.50.620:FF:000004">
    <property type="entry name" value="tRNA-specific 2-thiouridylase MnmA"/>
    <property type="match status" value="1"/>
</dbReference>
<dbReference type="Gene3D" id="2.30.30.280">
    <property type="entry name" value="Adenine nucleotide alpha hydrolases-like domains"/>
    <property type="match status" value="1"/>
</dbReference>
<dbReference type="Gene3D" id="3.40.50.620">
    <property type="entry name" value="HUPs"/>
    <property type="match status" value="1"/>
</dbReference>
<dbReference type="Gene3D" id="2.40.30.10">
    <property type="entry name" value="Translation factors"/>
    <property type="match status" value="1"/>
</dbReference>
<dbReference type="HAMAP" id="MF_00144">
    <property type="entry name" value="tRNA_thiouridyl_MnmA"/>
    <property type="match status" value="1"/>
</dbReference>
<dbReference type="InterPro" id="IPR004506">
    <property type="entry name" value="MnmA-like"/>
</dbReference>
<dbReference type="InterPro" id="IPR046885">
    <property type="entry name" value="MnmA-like_C"/>
</dbReference>
<dbReference type="InterPro" id="IPR046884">
    <property type="entry name" value="MnmA-like_central"/>
</dbReference>
<dbReference type="InterPro" id="IPR023382">
    <property type="entry name" value="MnmA-like_central_sf"/>
</dbReference>
<dbReference type="InterPro" id="IPR014729">
    <property type="entry name" value="Rossmann-like_a/b/a_fold"/>
</dbReference>
<dbReference type="NCBIfam" id="NF001138">
    <property type="entry name" value="PRK00143.1"/>
    <property type="match status" value="1"/>
</dbReference>
<dbReference type="NCBIfam" id="TIGR00420">
    <property type="entry name" value="trmU"/>
    <property type="match status" value="1"/>
</dbReference>
<dbReference type="PANTHER" id="PTHR11933:SF5">
    <property type="entry name" value="MITOCHONDRIAL TRNA-SPECIFIC 2-THIOURIDYLASE 1"/>
    <property type="match status" value="1"/>
</dbReference>
<dbReference type="PANTHER" id="PTHR11933">
    <property type="entry name" value="TRNA 5-METHYLAMINOMETHYL-2-THIOURIDYLATE -METHYLTRANSFERASE"/>
    <property type="match status" value="1"/>
</dbReference>
<dbReference type="Pfam" id="PF03054">
    <property type="entry name" value="tRNA_Me_trans"/>
    <property type="match status" value="1"/>
</dbReference>
<dbReference type="Pfam" id="PF20258">
    <property type="entry name" value="tRNA_Me_trans_C"/>
    <property type="match status" value="1"/>
</dbReference>
<dbReference type="Pfam" id="PF20259">
    <property type="entry name" value="tRNA_Me_trans_M"/>
    <property type="match status" value="1"/>
</dbReference>
<dbReference type="SUPFAM" id="SSF52402">
    <property type="entry name" value="Adenine nucleotide alpha hydrolases-like"/>
    <property type="match status" value="1"/>
</dbReference>
<accession>B0VBY5</accession>
<keyword id="KW-0067">ATP-binding</keyword>
<keyword id="KW-0963">Cytoplasm</keyword>
<keyword id="KW-1015">Disulfide bond</keyword>
<keyword id="KW-0547">Nucleotide-binding</keyword>
<keyword id="KW-0694">RNA-binding</keyword>
<keyword id="KW-0808">Transferase</keyword>
<keyword id="KW-0819">tRNA processing</keyword>
<keyword id="KW-0820">tRNA-binding</keyword>
<evidence type="ECO:0000255" key="1">
    <source>
        <dbReference type="HAMAP-Rule" id="MF_00144"/>
    </source>
</evidence>
<protein>
    <recommendedName>
        <fullName evidence="1">tRNA-specific 2-thiouridylase MnmA</fullName>
        <ecNumber evidence="1">2.8.1.13</ecNumber>
    </recommendedName>
</protein>
<gene>
    <name evidence="1" type="primary">mnmA</name>
    <name type="ordered locus">ABAYE1041</name>
</gene>
<organism>
    <name type="scientific">Acinetobacter baumannii (strain AYE)</name>
    <dbReference type="NCBI Taxonomy" id="509173"/>
    <lineage>
        <taxon>Bacteria</taxon>
        <taxon>Pseudomonadati</taxon>
        <taxon>Pseudomonadota</taxon>
        <taxon>Gammaproteobacteria</taxon>
        <taxon>Moraxellales</taxon>
        <taxon>Moraxellaceae</taxon>
        <taxon>Acinetobacter</taxon>
        <taxon>Acinetobacter calcoaceticus/baumannii complex</taxon>
    </lineage>
</organism>
<reference key="1">
    <citation type="journal article" date="2008" name="PLoS ONE">
        <title>Comparative analysis of Acinetobacters: three genomes for three lifestyles.</title>
        <authorList>
            <person name="Vallenet D."/>
            <person name="Nordmann P."/>
            <person name="Barbe V."/>
            <person name="Poirel L."/>
            <person name="Mangenot S."/>
            <person name="Bataille E."/>
            <person name="Dossat C."/>
            <person name="Gas S."/>
            <person name="Kreimeyer A."/>
            <person name="Lenoble P."/>
            <person name="Oztas S."/>
            <person name="Poulain J."/>
            <person name="Segurens B."/>
            <person name="Robert C."/>
            <person name="Abergel C."/>
            <person name="Claverie J.-M."/>
            <person name="Raoult D."/>
            <person name="Medigue C."/>
            <person name="Weissenbach J."/>
            <person name="Cruveiller S."/>
        </authorList>
    </citation>
    <scope>NUCLEOTIDE SEQUENCE [LARGE SCALE GENOMIC DNA]</scope>
    <source>
        <strain>AYE</strain>
    </source>
</reference>
<sequence>MQQRVIVGMSGGVDSSVSAALLLQQGYQVEGLFMKNWEEDDGTEYCTAMEDLADAQAVADKIGIKLHTANFAMEYWDRVFEHFLAEYAAGRTPNPDILCNKEIKFRAFLDHAMTLGADFIATGHYARRAETAYNSKGEAYAPLLRGLDNNKDQTYFLHAVHGREINKTLFPVGEIEKPEVRRIAEELDLATAKKKDSTGICFIGERRFNDFLKQYLPAQPGKIVLDNGKEVGEHHGLMYYTLGQRGGIGLGGMKGASEGAWFVLHKDVANNRLVVGQGHDHPLMQSTQLWSEAIDWVAGEQNIPAEGLRCTAKTRYRQPDQACTVFIDENSEHGVRVEFDEPQRAVTPGQSVVFYSDEVCLGGGVIHHTNAPTPNFI</sequence>
<comment type="function">
    <text evidence="1">Catalyzes the 2-thiolation of uridine at the wobble position (U34) of tRNA, leading to the formation of s(2)U34.</text>
</comment>
<comment type="catalytic activity">
    <reaction evidence="1">
        <text>S-sulfanyl-L-cysteinyl-[protein] + uridine(34) in tRNA + AH2 + ATP = 2-thiouridine(34) in tRNA + L-cysteinyl-[protein] + A + AMP + diphosphate + H(+)</text>
        <dbReference type="Rhea" id="RHEA:47032"/>
        <dbReference type="Rhea" id="RHEA-COMP:10131"/>
        <dbReference type="Rhea" id="RHEA-COMP:11726"/>
        <dbReference type="Rhea" id="RHEA-COMP:11727"/>
        <dbReference type="Rhea" id="RHEA-COMP:11728"/>
        <dbReference type="ChEBI" id="CHEBI:13193"/>
        <dbReference type="ChEBI" id="CHEBI:15378"/>
        <dbReference type="ChEBI" id="CHEBI:17499"/>
        <dbReference type="ChEBI" id="CHEBI:29950"/>
        <dbReference type="ChEBI" id="CHEBI:30616"/>
        <dbReference type="ChEBI" id="CHEBI:33019"/>
        <dbReference type="ChEBI" id="CHEBI:61963"/>
        <dbReference type="ChEBI" id="CHEBI:65315"/>
        <dbReference type="ChEBI" id="CHEBI:87170"/>
        <dbReference type="ChEBI" id="CHEBI:456215"/>
        <dbReference type="EC" id="2.8.1.13"/>
    </reaction>
</comment>
<comment type="subcellular location">
    <subcellularLocation>
        <location evidence="1">Cytoplasm</location>
    </subcellularLocation>
</comment>
<comment type="similarity">
    <text evidence="1">Belongs to the MnmA/TRMU family.</text>
</comment>
<name>MNMA_ACIBY</name>